<reference key="1">
    <citation type="journal article" date="2008" name="BMC Genomics">
        <title>Genomics of an extreme psychrophile, Psychromonas ingrahamii.</title>
        <authorList>
            <person name="Riley M."/>
            <person name="Staley J.T."/>
            <person name="Danchin A."/>
            <person name="Wang T.Z."/>
            <person name="Brettin T.S."/>
            <person name="Hauser L.J."/>
            <person name="Land M.L."/>
            <person name="Thompson L.S."/>
        </authorList>
    </citation>
    <scope>NUCLEOTIDE SEQUENCE [LARGE SCALE GENOMIC DNA]</scope>
    <source>
        <strain>DSM 17664 / CCUG 51855 / 37</strain>
    </source>
</reference>
<name>SECA_PSYIN</name>
<evidence type="ECO:0000255" key="1">
    <source>
        <dbReference type="HAMAP-Rule" id="MF_01382"/>
    </source>
</evidence>
<evidence type="ECO:0000256" key="2">
    <source>
        <dbReference type="SAM" id="MobiDB-lite"/>
    </source>
</evidence>
<dbReference type="EC" id="7.4.2.8" evidence="1"/>
<dbReference type="EMBL" id="CP000510">
    <property type="protein sequence ID" value="ABM02992.1"/>
    <property type="molecule type" value="Genomic_DNA"/>
</dbReference>
<dbReference type="RefSeq" id="WP_011769555.1">
    <property type="nucleotide sequence ID" value="NC_008709.1"/>
</dbReference>
<dbReference type="BMRB" id="A1SU27"/>
<dbReference type="SMR" id="A1SU27"/>
<dbReference type="STRING" id="357804.Ping_1155"/>
<dbReference type="KEGG" id="pin:Ping_1155"/>
<dbReference type="eggNOG" id="COG0653">
    <property type="taxonomic scope" value="Bacteria"/>
</dbReference>
<dbReference type="HOGENOM" id="CLU_005314_3_0_6"/>
<dbReference type="OrthoDB" id="9805579at2"/>
<dbReference type="Proteomes" id="UP000000639">
    <property type="component" value="Chromosome"/>
</dbReference>
<dbReference type="GO" id="GO:0031522">
    <property type="term" value="C:cell envelope Sec protein transport complex"/>
    <property type="evidence" value="ECO:0007669"/>
    <property type="project" value="TreeGrafter"/>
</dbReference>
<dbReference type="GO" id="GO:0005829">
    <property type="term" value="C:cytosol"/>
    <property type="evidence" value="ECO:0007669"/>
    <property type="project" value="TreeGrafter"/>
</dbReference>
<dbReference type="GO" id="GO:0005886">
    <property type="term" value="C:plasma membrane"/>
    <property type="evidence" value="ECO:0007669"/>
    <property type="project" value="UniProtKB-SubCell"/>
</dbReference>
<dbReference type="GO" id="GO:0005524">
    <property type="term" value="F:ATP binding"/>
    <property type="evidence" value="ECO:0007669"/>
    <property type="project" value="UniProtKB-UniRule"/>
</dbReference>
<dbReference type="GO" id="GO:0046872">
    <property type="term" value="F:metal ion binding"/>
    <property type="evidence" value="ECO:0007669"/>
    <property type="project" value="UniProtKB-KW"/>
</dbReference>
<dbReference type="GO" id="GO:0008564">
    <property type="term" value="F:protein-exporting ATPase activity"/>
    <property type="evidence" value="ECO:0007669"/>
    <property type="project" value="UniProtKB-EC"/>
</dbReference>
<dbReference type="GO" id="GO:0065002">
    <property type="term" value="P:intracellular protein transmembrane transport"/>
    <property type="evidence" value="ECO:0007669"/>
    <property type="project" value="UniProtKB-UniRule"/>
</dbReference>
<dbReference type="GO" id="GO:0017038">
    <property type="term" value="P:protein import"/>
    <property type="evidence" value="ECO:0007669"/>
    <property type="project" value="InterPro"/>
</dbReference>
<dbReference type="GO" id="GO:0006605">
    <property type="term" value="P:protein targeting"/>
    <property type="evidence" value="ECO:0007669"/>
    <property type="project" value="UniProtKB-UniRule"/>
</dbReference>
<dbReference type="GO" id="GO:0043952">
    <property type="term" value="P:protein transport by the Sec complex"/>
    <property type="evidence" value="ECO:0007669"/>
    <property type="project" value="TreeGrafter"/>
</dbReference>
<dbReference type="CDD" id="cd17928">
    <property type="entry name" value="DEXDc_SecA"/>
    <property type="match status" value="1"/>
</dbReference>
<dbReference type="CDD" id="cd18803">
    <property type="entry name" value="SF2_C_secA"/>
    <property type="match status" value="1"/>
</dbReference>
<dbReference type="FunFam" id="3.40.50.300:FF:000081">
    <property type="entry name" value="Preprotein translocase subunit SecA"/>
    <property type="match status" value="1"/>
</dbReference>
<dbReference type="FunFam" id="3.40.50.300:FF:000113">
    <property type="entry name" value="Preprotein translocase subunit SecA"/>
    <property type="match status" value="1"/>
</dbReference>
<dbReference type="FunFam" id="3.90.1440.10:FF:000001">
    <property type="entry name" value="Preprotein translocase subunit SecA"/>
    <property type="match status" value="1"/>
</dbReference>
<dbReference type="FunFam" id="1.10.3060.10:FF:000003">
    <property type="entry name" value="Protein translocase subunit SecA"/>
    <property type="match status" value="1"/>
</dbReference>
<dbReference type="Gene3D" id="1.10.3060.10">
    <property type="entry name" value="Helical scaffold and wing domains of SecA"/>
    <property type="match status" value="1"/>
</dbReference>
<dbReference type="Gene3D" id="3.40.50.300">
    <property type="entry name" value="P-loop containing nucleotide triphosphate hydrolases"/>
    <property type="match status" value="2"/>
</dbReference>
<dbReference type="Gene3D" id="3.90.1440.10">
    <property type="entry name" value="SecA, preprotein cross-linking domain"/>
    <property type="match status" value="1"/>
</dbReference>
<dbReference type="HAMAP" id="MF_01382">
    <property type="entry name" value="SecA"/>
    <property type="match status" value="1"/>
</dbReference>
<dbReference type="InterPro" id="IPR014001">
    <property type="entry name" value="Helicase_ATP-bd"/>
</dbReference>
<dbReference type="InterPro" id="IPR001650">
    <property type="entry name" value="Helicase_C-like"/>
</dbReference>
<dbReference type="InterPro" id="IPR027417">
    <property type="entry name" value="P-loop_NTPase"/>
</dbReference>
<dbReference type="InterPro" id="IPR004027">
    <property type="entry name" value="SEC_C_motif"/>
</dbReference>
<dbReference type="InterPro" id="IPR000185">
    <property type="entry name" value="SecA"/>
</dbReference>
<dbReference type="InterPro" id="IPR020937">
    <property type="entry name" value="SecA_CS"/>
</dbReference>
<dbReference type="InterPro" id="IPR011115">
    <property type="entry name" value="SecA_DEAD"/>
</dbReference>
<dbReference type="InterPro" id="IPR014018">
    <property type="entry name" value="SecA_motor_DEAD"/>
</dbReference>
<dbReference type="InterPro" id="IPR011130">
    <property type="entry name" value="SecA_preprotein_X-link_dom"/>
</dbReference>
<dbReference type="InterPro" id="IPR044722">
    <property type="entry name" value="SecA_SF2_C"/>
</dbReference>
<dbReference type="InterPro" id="IPR011116">
    <property type="entry name" value="SecA_Wing/Scaffold"/>
</dbReference>
<dbReference type="InterPro" id="IPR036266">
    <property type="entry name" value="SecA_Wing/Scaffold_sf"/>
</dbReference>
<dbReference type="InterPro" id="IPR036670">
    <property type="entry name" value="SecA_X-link_sf"/>
</dbReference>
<dbReference type="NCBIfam" id="NF009538">
    <property type="entry name" value="PRK12904.1"/>
    <property type="match status" value="1"/>
</dbReference>
<dbReference type="NCBIfam" id="TIGR00963">
    <property type="entry name" value="secA"/>
    <property type="match status" value="1"/>
</dbReference>
<dbReference type="PANTHER" id="PTHR30612:SF0">
    <property type="entry name" value="CHLOROPLAST PROTEIN-TRANSPORTING ATPASE"/>
    <property type="match status" value="1"/>
</dbReference>
<dbReference type="PANTHER" id="PTHR30612">
    <property type="entry name" value="SECA INNER MEMBRANE COMPONENT OF SEC PROTEIN SECRETION SYSTEM"/>
    <property type="match status" value="1"/>
</dbReference>
<dbReference type="Pfam" id="PF21090">
    <property type="entry name" value="P-loop_SecA"/>
    <property type="match status" value="1"/>
</dbReference>
<dbReference type="Pfam" id="PF02810">
    <property type="entry name" value="SEC-C"/>
    <property type="match status" value="1"/>
</dbReference>
<dbReference type="Pfam" id="PF07517">
    <property type="entry name" value="SecA_DEAD"/>
    <property type="match status" value="1"/>
</dbReference>
<dbReference type="Pfam" id="PF01043">
    <property type="entry name" value="SecA_PP_bind"/>
    <property type="match status" value="1"/>
</dbReference>
<dbReference type="Pfam" id="PF07516">
    <property type="entry name" value="SecA_SW"/>
    <property type="match status" value="1"/>
</dbReference>
<dbReference type="PRINTS" id="PR00906">
    <property type="entry name" value="SECA"/>
</dbReference>
<dbReference type="SMART" id="SM00957">
    <property type="entry name" value="SecA_DEAD"/>
    <property type="match status" value="1"/>
</dbReference>
<dbReference type="SMART" id="SM00958">
    <property type="entry name" value="SecA_PP_bind"/>
    <property type="match status" value="1"/>
</dbReference>
<dbReference type="SUPFAM" id="SSF81886">
    <property type="entry name" value="Helical scaffold and wing domains of SecA"/>
    <property type="match status" value="1"/>
</dbReference>
<dbReference type="SUPFAM" id="SSF52540">
    <property type="entry name" value="P-loop containing nucleoside triphosphate hydrolases"/>
    <property type="match status" value="2"/>
</dbReference>
<dbReference type="SUPFAM" id="SSF81767">
    <property type="entry name" value="Pre-protein crosslinking domain of SecA"/>
    <property type="match status" value="1"/>
</dbReference>
<dbReference type="PROSITE" id="PS01312">
    <property type="entry name" value="SECA"/>
    <property type="match status" value="1"/>
</dbReference>
<dbReference type="PROSITE" id="PS51196">
    <property type="entry name" value="SECA_MOTOR_DEAD"/>
    <property type="match status" value="1"/>
</dbReference>
<accession>A1SU27</accession>
<gene>
    <name evidence="1" type="primary">secA</name>
    <name type="ordered locus">Ping_1155</name>
</gene>
<comment type="function">
    <text evidence="1">Part of the Sec protein translocase complex. Interacts with the SecYEG preprotein conducting channel. Has a central role in coupling the hydrolysis of ATP to the transfer of proteins into and across the cell membrane, serving both as a receptor for the preprotein-SecB complex and as an ATP-driven molecular motor driving the stepwise translocation of polypeptide chains across the membrane.</text>
</comment>
<comment type="catalytic activity">
    <reaction evidence="1">
        <text>ATP + H2O + cellular proteinSide 1 = ADP + phosphate + cellular proteinSide 2.</text>
        <dbReference type="EC" id="7.4.2.8"/>
    </reaction>
</comment>
<comment type="cofactor">
    <cofactor evidence="1">
        <name>Zn(2+)</name>
        <dbReference type="ChEBI" id="CHEBI:29105"/>
    </cofactor>
    <text evidence="1">May bind 1 zinc ion per subunit.</text>
</comment>
<comment type="subunit">
    <text evidence="1">Monomer and homodimer. Part of the essential Sec protein translocation apparatus which comprises SecA, SecYEG and auxiliary proteins SecDF-YajC and YidC.</text>
</comment>
<comment type="subcellular location">
    <subcellularLocation>
        <location evidence="1">Cell inner membrane</location>
        <topology evidence="1">Peripheral membrane protein</topology>
        <orientation evidence="1">Cytoplasmic side</orientation>
    </subcellularLocation>
    <subcellularLocation>
        <location evidence="1">Cytoplasm</location>
    </subcellularLocation>
    <text evidence="1">Distribution is 50-50.</text>
</comment>
<comment type="similarity">
    <text evidence="1">Belongs to the SecA family.</text>
</comment>
<organism>
    <name type="scientific">Psychromonas ingrahamii (strain DSM 17664 / CCUG 51855 / 37)</name>
    <dbReference type="NCBI Taxonomy" id="357804"/>
    <lineage>
        <taxon>Bacteria</taxon>
        <taxon>Pseudomonadati</taxon>
        <taxon>Pseudomonadota</taxon>
        <taxon>Gammaproteobacteria</taxon>
        <taxon>Alteromonadales</taxon>
        <taxon>Psychromonadaceae</taxon>
        <taxon>Psychromonas</taxon>
    </lineage>
</organism>
<protein>
    <recommendedName>
        <fullName evidence="1">Protein translocase subunit SecA</fullName>
        <ecNumber evidence="1">7.4.2.8</ecNumber>
    </recommendedName>
</protein>
<keyword id="KW-0067">ATP-binding</keyword>
<keyword id="KW-0997">Cell inner membrane</keyword>
<keyword id="KW-1003">Cell membrane</keyword>
<keyword id="KW-0963">Cytoplasm</keyword>
<keyword id="KW-0472">Membrane</keyword>
<keyword id="KW-0479">Metal-binding</keyword>
<keyword id="KW-0547">Nucleotide-binding</keyword>
<keyword id="KW-0653">Protein transport</keyword>
<keyword id="KW-1185">Reference proteome</keyword>
<keyword id="KW-1278">Translocase</keyword>
<keyword id="KW-0811">Translocation</keyword>
<keyword id="KW-0813">Transport</keyword>
<keyword id="KW-0862">Zinc</keyword>
<sequence length="906" mass="102284">MITGLITKIIGSRNDRYLKKLRKVADEINKLEPQMKALSDEELKAKTIEFKERLASGESLDKILVEAFAVVRNASERVFGMRQFDVQLIGGMVLNDNKIAEMRTGEGKTLTATLPAYLNALSGKGVHIITVNDYLAGRDAKWNAKLFEFLGLTVGINISGMSGDQKRAAYAADITYGTNNEFGFDYLRDNMAFEAQQRVMRSLHYAIIDEVDSILIDEARTPLIISGPTDGDATLYTELNTVIPMLTQQDKEDTEEYIGEGDFTVDEKNKQVLLTERGQEKVEVILQERGLLDENQSLYSAASISLLHHVNAALRAHTLFEKDVEYIVTEKGEVVIVDEHSGRTMPGRRWSEGLHQAVEAKEGVQIQNENQTLASITFQNYFRLYEKLAGMTGTADTEAFEFQSIYGLETIVIPTNQAMIRKDGGDLVYLTEQEKYQAIVDDIKPRLEKGQPILVGTVSIEHSELLSDLMDKAKIKHSVLNAKFHAKEADIIAQAGALGSVTIATNMAGRGTDIVLGGNLEARLDKLGDVSPKEIEAEKELWKEEHKKVLKAGGLYIVGTERHESRRIDNQLRGRSGRQGDPGESRFYLSMEDSLMRIFASEKVSNMMKKLGMEKGEAIEHPWVSRAIENAQRKVEGRNFDMRKSLLDFDDVSNEQRKVIYQQRNGVIDSEEITETIEQIWDDVFHNCVNEYVPPHSLTEQWDLEGLEQRLKADFLVDLPVRQWSIDDANLQEGSIREKVVEHAKASYLAKKEQVGPAIIGSFEKSVMLQTIDTLWKEHLAAMDHLRQGIHLRGYAQKDPKQEYKRESFELFLQMLENLKREVVVILSKVQVQSKEEADVIQEQRRQAEAKAQLEMKHAQVNKGEVVSDENTGDDTFVRNEKKVGRNEPCPCGSGKKYKQCHGKLD</sequence>
<feature type="chain" id="PRO_0000320909" description="Protein translocase subunit SecA">
    <location>
        <begin position="1"/>
        <end position="906"/>
    </location>
</feature>
<feature type="region of interest" description="Disordered" evidence="2">
    <location>
        <begin position="860"/>
        <end position="906"/>
    </location>
</feature>
<feature type="compositionally biased region" description="Basic and acidic residues" evidence="2">
    <location>
        <begin position="876"/>
        <end position="886"/>
    </location>
</feature>
<feature type="compositionally biased region" description="Basic residues" evidence="2">
    <location>
        <begin position="896"/>
        <end position="906"/>
    </location>
</feature>
<feature type="binding site" evidence="1">
    <location>
        <position position="87"/>
    </location>
    <ligand>
        <name>ATP</name>
        <dbReference type="ChEBI" id="CHEBI:30616"/>
    </ligand>
</feature>
<feature type="binding site" evidence="1">
    <location>
        <begin position="105"/>
        <end position="109"/>
    </location>
    <ligand>
        <name>ATP</name>
        <dbReference type="ChEBI" id="CHEBI:30616"/>
    </ligand>
</feature>
<feature type="binding site" evidence="1">
    <location>
        <position position="513"/>
    </location>
    <ligand>
        <name>ATP</name>
        <dbReference type="ChEBI" id="CHEBI:30616"/>
    </ligand>
</feature>
<feature type="binding site" evidence="1">
    <location>
        <position position="890"/>
    </location>
    <ligand>
        <name>Zn(2+)</name>
        <dbReference type="ChEBI" id="CHEBI:29105"/>
    </ligand>
</feature>
<feature type="binding site" evidence="1">
    <location>
        <position position="892"/>
    </location>
    <ligand>
        <name>Zn(2+)</name>
        <dbReference type="ChEBI" id="CHEBI:29105"/>
    </ligand>
</feature>
<feature type="binding site" evidence="1">
    <location>
        <position position="901"/>
    </location>
    <ligand>
        <name>Zn(2+)</name>
        <dbReference type="ChEBI" id="CHEBI:29105"/>
    </ligand>
</feature>
<feature type="binding site" evidence="1">
    <location>
        <position position="902"/>
    </location>
    <ligand>
        <name>Zn(2+)</name>
        <dbReference type="ChEBI" id="CHEBI:29105"/>
    </ligand>
</feature>
<proteinExistence type="inferred from homology"/>